<evidence type="ECO:0000255" key="1">
    <source>
        <dbReference type="HAMAP-Rule" id="MF_01646"/>
    </source>
</evidence>
<proteinExistence type="inferred from homology"/>
<feature type="chain" id="PRO_1000186960" description="Siroheme synthase">
    <location>
        <begin position="1"/>
        <end position="489"/>
    </location>
</feature>
<feature type="region of interest" description="Precorrin-2 dehydrogenase /sirohydrochlorin ferrochelatase" evidence="1">
    <location>
        <begin position="1"/>
        <end position="203"/>
    </location>
</feature>
<feature type="region of interest" description="Uroporphyrinogen-III C-methyltransferase" evidence="1">
    <location>
        <begin position="218"/>
        <end position="489"/>
    </location>
</feature>
<feature type="active site" description="Proton acceptor" evidence="1">
    <location>
        <position position="250"/>
    </location>
</feature>
<feature type="active site" description="Proton donor" evidence="1">
    <location>
        <position position="272"/>
    </location>
</feature>
<feature type="binding site" evidence="1">
    <location>
        <begin position="22"/>
        <end position="23"/>
    </location>
    <ligand>
        <name>NAD(+)</name>
        <dbReference type="ChEBI" id="CHEBI:57540"/>
    </ligand>
</feature>
<feature type="binding site" evidence="1">
    <location>
        <begin position="43"/>
        <end position="44"/>
    </location>
    <ligand>
        <name>NAD(+)</name>
        <dbReference type="ChEBI" id="CHEBI:57540"/>
    </ligand>
</feature>
<feature type="binding site" evidence="1">
    <location>
        <position position="227"/>
    </location>
    <ligand>
        <name>S-adenosyl-L-methionine</name>
        <dbReference type="ChEBI" id="CHEBI:59789"/>
    </ligand>
</feature>
<feature type="binding site" evidence="1">
    <location>
        <begin position="303"/>
        <end position="305"/>
    </location>
    <ligand>
        <name>S-adenosyl-L-methionine</name>
        <dbReference type="ChEBI" id="CHEBI:59789"/>
    </ligand>
</feature>
<feature type="binding site" evidence="1">
    <location>
        <position position="308"/>
    </location>
    <ligand>
        <name>S-adenosyl-L-methionine</name>
        <dbReference type="ChEBI" id="CHEBI:59789"/>
    </ligand>
</feature>
<feature type="binding site" evidence="1">
    <location>
        <begin position="333"/>
        <end position="334"/>
    </location>
    <ligand>
        <name>S-adenosyl-L-methionine</name>
        <dbReference type="ChEBI" id="CHEBI:59789"/>
    </ligand>
</feature>
<feature type="binding site" evidence="1">
    <location>
        <position position="385"/>
    </location>
    <ligand>
        <name>S-adenosyl-L-methionine</name>
        <dbReference type="ChEBI" id="CHEBI:59789"/>
    </ligand>
</feature>
<feature type="binding site" evidence="1">
    <location>
        <position position="414"/>
    </location>
    <ligand>
        <name>S-adenosyl-L-methionine</name>
        <dbReference type="ChEBI" id="CHEBI:59789"/>
    </ligand>
</feature>
<reference key="1">
    <citation type="journal article" date="2011" name="Stand. Genomic Sci.">
        <title>Complete genome sequence of 'Thioalkalivibrio sulfidophilus' HL-EbGr7.</title>
        <authorList>
            <person name="Muyzer G."/>
            <person name="Sorokin D.Y."/>
            <person name="Mavromatis K."/>
            <person name="Lapidus A."/>
            <person name="Clum A."/>
            <person name="Ivanova N."/>
            <person name="Pati A."/>
            <person name="d'Haeseleer P."/>
            <person name="Woyke T."/>
            <person name="Kyrpides N.C."/>
        </authorList>
    </citation>
    <scope>NUCLEOTIDE SEQUENCE [LARGE SCALE GENOMIC DNA]</scope>
    <source>
        <strain>HL-EbGR7</strain>
    </source>
</reference>
<protein>
    <recommendedName>
        <fullName evidence="1">Siroheme synthase</fullName>
    </recommendedName>
    <domain>
        <recommendedName>
            <fullName evidence="1">Uroporphyrinogen-III C-methyltransferase</fullName>
            <shortName evidence="1">Urogen III methylase</shortName>
            <ecNumber evidence="1">2.1.1.107</ecNumber>
        </recommendedName>
        <alternativeName>
            <fullName evidence="1">SUMT</fullName>
        </alternativeName>
        <alternativeName>
            <fullName evidence="1">Uroporphyrinogen III methylase</fullName>
            <shortName evidence="1">UROM</shortName>
        </alternativeName>
    </domain>
    <domain>
        <recommendedName>
            <fullName evidence="1">Precorrin-2 dehydrogenase</fullName>
            <ecNumber evidence="1">1.3.1.76</ecNumber>
        </recommendedName>
    </domain>
    <domain>
        <recommendedName>
            <fullName evidence="1">Sirohydrochlorin ferrochelatase</fullName>
            <ecNumber evidence="1">4.99.1.4</ecNumber>
        </recommendedName>
    </domain>
</protein>
<comment type="function">
    <text evidence="1">Multifunctional enzyme that catalyzes the SAM-dependent methylations of uroporphyrinogen III at position C-2 and C-7 to form precorrin-2 via precorrin-1. Then it catalyzes the NAD-dependent ring dehydrogenation of precorrin-2 to yield sirohydrochlorin. Finally, it catalyzes the ferrochelation of sirohydrochlorin to yield siroheme.</text>
</comment>
<comment type="catalytic activity">
    <reaction evidence="1">
        <text>uroporphyrinogen III + 2 S-adenosyl-L-methionine = precorrin-2 + 2 S-adenosyl-L-homocysteine + H(+)</text>
        <dbReference type="Rhea" id="RHEA:32459"/>
        <dbReference type="ChEBI" id="CHEBI:15378"/>
        <dbReference type="ChEBI" id="CHEBI:57308"/>
        <dbReference type="ChEBI" id="CHEBI:57856"/>
        <dbReference type="ChEBI" id="CHEBI:58827"/>
        <dbReference type="ChEBI" id="CHEBI:59789"/>
        <dbReference type="EC" id="2.1.1.107"/>
    </reaction>
</comment>
<comment type="catalytic activity">
    <reaction evidence="1">
        <text>precorrin-2 + NAD(+) = sirohydrochlorin + NADH + 2 H(+)</text>
        <dbReference type="Rhea" id="RHEA:15613"/>
        <dbReference type="ChEBI" id="CHEBI:15378"/>
        <dbReference type="ChEBI" id="CHEBI:57540"/>
        <dbReference type="ChEBI" id="CHEBI:57945"/>
        <dbReference type="ChEBI" id="CHEBI:58351"/>
        <dbReference type="ChEBI" id="CHEBI:58827"/>
        <dbReference type="EC" id="1.3.1.76"/>
    </reaction>
</comment>
<comment type="catalytic activity">
    <reaction evidence="1">
        <text>siroheme + 2 H(+) = sirohydrochlorin + Fe(2+)</text>
        <dbReference type="Rhea" id="RHEA:24360"/>
        <dbReference type="ChEBI" id="CHEBI:15378"/>
        <dbReference type="ChEBI" id="CHEBI:29033"/>
        <dbReference type="ChEBI" id="CHEBI:58351"/>
        <dbReference type="ChEBI" id="CHEBI:60052"/>
        <dbReference type="EC" id="4.99.1.4"/>
    </reaction>
</comment>
<comment type="pathway">
    <text evidence="1">Cofactor biosynthesis; adenosylcobalamin biosynthesis; precorrin-2 from uroporphyrinogen III: step 1/1.</text>
</comment>
<comment type="pathway">
    <text evidence="1">Cofactor biosynthesis; adenosylcobalamin biosynthesis; sirohydrochlorin from precorrin-2: step 1/1.</text>
</comment>
<comment type="pathway">
    <text evidence="1">Porphyrin-containing compound metabolism; siroheme biosynthesis; precorrin-2 from uroporphyrinogen III: step 1/1.</text>
</comment>
<comment type="pathway">
    <text evidence="1">Porphyrin-containing compound metabolism; siroheme biosynthesis; siroheme from sirohydrochlorin: step 1/1.</text>
</comment>
<comment type="pathway">
    <text evidence="1">Porphyrin-containing compound metabolism; siroheme biosynthesis; sirohydrochlorin from precorrin-2: step 1/1.</text>
</comment>
<comment type="similarity">
    <text evidence="1">In the N-terminal section; belongs to the precorrin-2 dehydrogenase / sirohydrochlorin ferrochelatase family.</text>
</comment>
<comment type="similarity">
    <text evidence="1">In the C-terminal section; belongs to the precorrin methyltransferase family.</text>
</comment>
<gene>
    <name evidence="1" type="primary">cysG</name>
    <name type="ordered locus">Tgr7_2173</name>
</gene>
<name>CYSG_THISH</name>
<dbReference type="EC" id="2.1.1.107" evidence="1"/>
<dbReference type="EC" id="1.3.1.76" evidence="1"/>
<dbReference type="EC" id="4.99.1.4" evidence="1"/>
<dbReference type="EMBL" id="CP001339">
    <property type="protein sequence ID" value="ACL73253.1"/>
    <property type="molecule type" value="Genomic_DNA"/>
</dbReference>
<dbReference type="RefSeq" id="WP_012638731.1">
    <property type="nucleotide sequence ID" value="NC_011901.1"/>
</dbReference>
<dbReference type="SMR" id="B8GUD3"/>
<dbReference type="STRING" id="396588.Tgr7_2173"/>
<dbReference type="KEGG" id="tgr:Tgr7_2173"/>
<dbReference type="eggNOG" id="COG0007">
    <property type="taxonomic scope" value="Bacteria"/>
</dbReference>
<dbReference type="eggNOG" id="COG1648">
    <property type="taxonomic scope" value="Bacteria"/>
</dbReference>
<dbReference type="HOGENOM" id="CLU_011276_2_1_6"/>
<dbReference type="OrthoDB" id="9815856at2"/>
<dbReference type="UniPathway" id="UPA00148">
    <property type="reaction ID" value="UER00211"/>
</dbReference>
<dbReference type="UniPathway" id="UPA00148">
    <property type="reaction ID" value="UER00222"/>
</dbReference>
<dbReference type="UniPathway" id="UPA00262">
    <property type="reaction ID" value="UER00211"/>
</dbReference>
<dbReference type="UniPathway" id="UPA00262">
    <property type="reaction ID" value="UER00222"/>
</dbReference>
<dbReference type="UniPathway" id="UPA00262">
    <property type="reaction ID" value="UER00376"/>
</dbReference>
<dbReference type="Proteomes" id="UP000002383">
    <property type="component" value="Chromosome"/>
</dbReference>
<dbReference type="GO" id="GO:0051287">
    <property type="term" value="F:NAD binding"/>
    <property type="evidence" value="ECO:0007669"/>
    <property type="project" value="InterPro"/>
</dbReference>
<dbReference type="GO" id="GO:0043115">
    <property type="term" value="F:precorrin-2 dehydrogenase activity"/>
    <property type="evidence" value="ECO:0007669"/>
    <property type="project" value="UniProtKB-UniRule"/>
</dbReference>
<dbReference type="GO" id="GO:0051266">
    <property type="term" value="F:sirohydrochlorin ferrochelatase activity"/>
    <property type="evidence" value="ECO:0007669"/>
    <property type="project" value="UniProtKB-EC"/>
</dbReference>
<dbReference type="GO" id="GO:0004851">
    <property type="term" value="F:uroporphyrin-III C-methyltransferase activity"/>
    <property type="evidence" value="ECO:0007669"/>
    <property type="project" value="UniProtKB-UniRule"/>
</dbReference>
<dbReference type="GO" id="GO:0009236">
    <property type="term" value="P:cobalamin biosynthetic process"/>
    <property type="evidence" value="ECO:0007669"/>
    <property type="project" value="UniProtKB-UniRule"/>
</dbReference>
<dbReference type="GO" id="GO:0032259">
    <property type="term" value="P:methylation"/>
    <property type="evidence" value="ECO:0007669"/>
    <property type="project" value="UniProtKB-KW"/>
</dbReference>
<dbReference type="GO" id="GO:0019354">
    <property type="term" value="P:siroheme biosynthetic process"/>
    <property type="evidence" value="ECO:0007669"/>
    <property type="project" value="UniProtKB-UniRule"/>
</dbReference>
<dbReference type="CDD" id="cd11642">
    <property type="entry name" value="SUMT"/>
    <property type="match status" value="1"/>
</dbReference>
<dbReference type="FunFam" id="3.30.160.110:FF:000001">
    <property type="entry name" value="Siroheme synthase"/>
    <property type="match status" value="1"/>
</dbReference>
<dbReference type="FunFam" id="3.30.950.10:FF:000001">
    <property type="entry name" value="Siroheme synthase"/>
    <property type="match status" value="1"/>
</dbReference>
<dbReference type="FunFam" id="3.40.1010.10:FF:000001">
    <property type="entry name" value="Siroheme synthase"/>
    <property type="match status" value="1"/>
</dbReference>
<dbReference type="Gene3D" id="3.40.1010.10">
    <property type="entry name" value="Cobalt-precorrin-4 Transmethylase, Domain 1"/>
    <property type="match status" value="1"/>
</dbReference>
<dbReference type="Gene3D" id="3.30.950.10">
    <property type="entry name" value="Methyltransferase, Cobalt-precorrin-4 Transmethylase, Domain 2"/>
    <property type="match status" value="1"/>
</dbReference>
<dbReference type="Gene3D" id="3.40.50.720">
    <property type="entry name" value="NAD(P)-binding Rossmann-like Domain"/>
    <property type="match status" value="1"/>
</dbReference>
<dbReference type="Gene3D" id="1.10.8.210">
    <property type="entry name" value="Sirohaem synthase, dimerisation domain"/>
    <property type="match status" value="1"/>
</dbReference>
<dbReference type="Gene3D" id="3.30.160.110">
    <property type="entry name" value="Siroheme synthase, domain 2"/>
    <property type="match status" value="1"/>
</dbReference>
<dbReference type="HAMAP" id="MF_01646">
    <property type="entry name" value="Siroheme_synth"/>
    <property type="match status" value="1"/>
</dbReference>
<dbReference type="InterPro" id="IPR000878">
    <property type="entry name" value="4pyrrol_Mease"/>
</dbReference>
<dbReference type="InterPro" id="IPR035996">
    <property type="entry name" value="4pyrrol_Methylase_sf"/>
</dbReference>
<dbReference type="InterPro" id="IPR014777">
    <property type="entry name" value="4pyrrole_Mease_sub1"/>
</dbReference>
<dbReference type="InterPro" id="IPR014776">
    <property type="entry name" value="4pyrrole_Mease_sub2"/>
</dbReference>
<dbReference type="InterPro" id="IPR006366">
    <property type="entry name" value="CobA/CysG_C"/>
</dbReference>
<dbReference type="InterPro" id="IPR036291">
    <property type="entry name" value="NAD(P)-bd_dom_sf"/>
</dbReference>
<dbReference type="InterPro" id="IPR050161">
    <property type="entry name" value="Siro_Cobalamin_biosynth"/>
</dbReference>
<dbReference type="InterPro" id="IPR037115">
    <property type="entry name" value="Sirohaem_synt_dimer_dom_sf"/>
</dbReference>
<dbReference type="InterPro" id="IPR012409">
    <property type="entry name" value="Sirohaem_synth"/>
</dbReference>
<dbReference type="InterPro" id="IPR028281">
    <property type="entry name" value="Sirohaem_synthase_central"/>
</dbReference>
<dbReference type="InterPro" id="IPR019478">
    <property type="entry name" value="Sirohaem_synthase_dimer_dom"/>
</dbReference>
<dbReference type="InterPro" id="IPR006367">
    <property type="entry name" value="Sirohaem_synthase_N"/>
</dbReference>
<dbReference type="InterPro" id="IPR003043">
    <property type="entry name" value="Uropor_MeTrfase_CS"/>
</dbReference>
<dbReference type="NCBIfam" id="TIGR01469">
    <property type="entry name" value="cobA_cysG_Cterm"/>
    <property type="match status" value="1"/>
</dbReference>
<dbReference type="NCBIfam" id="TIGR01470">
    <property type="entry name" value="cysG_Nterm"/>
    <property type="match status" value="1"/>
</dbReference>
<dbReference type="NCBIfam" id="NF004790">
    <property type="entry name" value="PRK06136.1"/>
    <property type="match status" value="1"/>
</dbReference>
<dbReference type="NCBIfam" id="NF007922">
    <property type="entry name" value="PRK10637.1"/>
    <property type="match status" value="1"/>
</dbReference>
<dbReference type="PANTHER" id="PTHR45790:SF1">
    <property type="entry name" value="SIROHEME SYNTHASE"/>
    <property type="match status" value="1"/>
</dbReference>
<dbReference type="PANTHER" id="PTHR45790">
    <property type="entry name" value="SIROHEME SYNTHASE-RELATED"/>
    <property type="match status" value="1"/>
</dbReference>
<dbReference type="Pfam" id="PF10414">
    <property type="entry name" value="CysG_dimeriser"/>
    <property type="match status" value="1"/>
</dbReference>
<dbReference type="Pfam" id="PF13241">
    <property type="entry name" value="NAD_binding_7"/>
    <property type="match status" value="1"/>
</dbReference>
<dbReference type="Pfam" id="PF14824">
    <property type="entry name" value="Sirohm_synth_M"/>
    <property type="match status" value="1"/>
</dbReference>
<dbReference type="Pfam" id="PF00590">
    <property type="entry name" value="TP_methylase"/>
    <property type="match status" value="1"/>
</dbReference>
<dbReference type="PIRSF" id="PIRSF036426">
    <property type="entry name" value="Sirohaem_synth"/>
    <property type="match status" value="1"/>
</dbReference>
<dbReference type="SUPFAM" id="SSF51735">
    <property type="entry name" value="NAD(P)-binding Rossmann-fold domains"/>
    <property type="match status" value="1"/>
</dbReference>
<dbReference type="SUPFAM" id="SSF75615">
    <property type="entry name" value="Siroheme synthase middle domains-like"/>
    <property type="match status" value="1"/>
</dbReference>
<dbReference type="SUPFAM" id="SSF53790">
    <property type="entry name" value="Tetrapyrrole methylase"/>
    <property type="match status" value="1"/>
</dbReference>
<dbReference type="PROSITE" id="PS00840">
    <property type="entry name" value="SUMT_2"/>
    <property type="match status" value="1"/>
</dbReference>
<keyword id="KW-0169">Cobalamin biosynthesis</keyword>
<keyword id="KW-0456">Lyase</keyword>
<keyword id="KW-0489">Methyltransferase</keyword>
<keyword id="KW-0511">Multifunctional enzyme</keyword>
<keyword id="KW-0520">NAD</keyword>
<keyword id="KW-0560">Oxidoreductase</keyword>
<keyword id="KW-0627">Porphyrin biosynthesis</keyword>
<keyword id="KW-1185">Reference proteome</keyword>
<keyword id="KW-0949">S-adenosyl-L-methionine</keyword>
<keyword id="KW-0808">Transferase</keyword>
<accession>B8GUD3</accession>
<organism>
    <name type="scientific">Thioalkalivibrio sulfidiphilus (strain HL-EbGR7)</name>
    <dbReference type="NCBI Taxonomy" id="396588"/>
    <lineage>
        <taxon>Bacteria</taxon>
        <taxon>Pseudomonadati</taxon>
        <taxon>Pseudomonadota</taxon>
        <taxon>Gammaproteobacteria</taxon>
        <taxon>Chromatiales</taxon>
        <taxon>Ectothiorhodospiraceae</taxon>
        <taxon>Thioalkalivibrio</taxon>
    </lineage>
</organism>
<sequence length="489" mass="53653">MDFFPVFMRLKDRACLVVGGGPVALRKVSLLRKAHARVTVVSPALCPELAALKARDAIEHLPRGFEDADVDARVLVIAATDDEDLNRHVSELCTERCIPVNVVDQPELCGFITPSMIDRSPIQVAVSTGGSSPVLARLLRSRIESFIPAAYGRLAALVEGYRLKVKARIPDTELRRRFWERLLEGPVTELFMSGREDAARETLEKALETGLDTRDAGGEVFLVGAGPGDPDLLTFRALRLMQLADVVVYDNLVSPAIIELVRRDAEMIYAGKKRNLHTLPQEEINQLLVRLAKEGKRVLRLKGGDPFIFGRGGEEIDTLMQEGIPFQVVPGITAAAGCASFSGIPLTHRDYAQAVVFATGHLRDGSIDLNWKMLAQPRQTVVFYMGLLGLPIICRELMAHGVSPDMPMALVEQGTTQNQRVIVGTLASMPDLVKDYDVQPPTLIIVGEVVKLHERLKWFQPGTDHTVKSLFSSQGQVVEARSSTEGAEA</sequence>